<organism>
    <name type="scientific">Homo sapiens</name>
    <name type="common">Human</name>
    <dbReference type="NCBI Taxonomy" id="9606"/>
    <lineage>
        <taxon>Eukaryota</taxon>
        <taxon>Metazoa</taxon>
        <taxon>Chordata</taxon>
        <taxon>Craniata</taxon>
        <taxon>Vertebrata</taxon>
        <taxon>Euteleostomi</taxon>
        <taxon>Mammalia</taxon>
        <taxon>Eutheria</taxon>
        <taxon>Euarchontoglires</taxon>
        <taxon>Primates</taxon>
        <taxon>Haplorrhini</taxon>
        <taxon>Catarrhini</taxon>
        <taxon>Hominidae</taxon>
        <taxon>Homo</taxon>
    </lineage>
</organism>
<accession>Q6DKK2</accession>
<accession>A8MZ52</accession>
<accession>B3KP62</accession>
<accession>B4DN65</accession>
<accession>Q2M248</accession>
<accession>Q7L3U8</accession>
<accession>Q9H6G3</accession>
<accession>Q9NXB2</accession>
<dbReference type="EMBL" id="AK000350">
    <property type="protein sequence ID" value="BAA91103.1"/>
    <property type="status" value="ALT_INIT"/>
    <property type="molecule type" value="mRNA"/>
</dbReference>
<dbReference type="EMBL" id="AK025958">
    <property type="protein sequence ID" value="BAB15296.1"/>
    <property type="status" value="ALT_INIT"/>
    <property type="molecule type" value="mRNA"/>
</dbReference>
<dbReference type="EMBL" id="AK055780">
    <property type="protein sequence ID" value="BAG51574.1"/>
    <property type="status" value="ALT_INIT"/>
    <property type="molecule type" value="mRNA"/>
</dbReference>
<dbReference type="EMBL" id="AK056878">
    <property type="protein sequence ID" value="BAG51820.1"/>
    <property type="status" value="ALT_INIT"/>
    <property type="molecule type" value="mRNA"/>
</dbReference>
<dbReference type="EMBL" id="AK297783">
    <property type="protein sequence ID" value="BAG60127.1"/>
    <property type="molecule type" value="mRNA"/>
</dbReference>
<dbReference type="EMBL" id="AC006251">
    <property type="status" value="NOT_ANNOTATED_CDS"/>
    <property type="molecule type" value="Genomic_DNA"/>
</dbReference>
<dbReference type="EMBL" id="AC002553">
    <property type="status" value="NOT_ANNOTATED_CDS"/>
    <property type="molecule type" value="Genomic_DNA"/>
</dbReference>
<dbReference type="EMBL" id="CH471222">
    <property type="protein sequence ID" value="EAX04490.1"/>
    <property type="molecule type" value="Genomic_DNA"/>
</dbReference>
<dbReference type="EMBL" id="BC011698">
    <property type="protein sequence ID" value="AAH11698.2"/>
    <property type="status" value="ALT_INIT"/>
    <property type="molecule type" value="mRNA"/>
</dbReference>
<dbReference type="EMBL" id="BC073796">
    <property type="protein sequence ID" value="AAH73796.1"/>
    <property type="status" value="ALT_INIT"/>
    <property type="molecule type" value="mRNA"/>
</dbReference>
<dbReference type="EMBL" id="BC105128">
    <property type="protein sequence ID" value="AAI05129.1"/>
    <property type="status" value="ALT_INIT"/>
    <property type="molecule type" value="mRNA"/>
</dbReference>
<dbReference type="EMBL" id="BC112107">
    <property type="protein sequence ID" value="AAI12108.1"/>
    <property type="status" value="ALT_INIT"/>
    <property type="molecule type" value="mRNA"/>
</dbReference>
<dbReference type="CCDS" id="CCDS11174.2"/>
<dbReference type="RefSeq" id="NP_001258349.1">
    <property type="nucleotide sequence ID" value="NM_001271420.1"/>
</dbReference>
<dbReference type="RefSeq" id="NP_060245.3">
    <property type="nucleotide sequence ID" value="NM_017775.3"/>
</dbReference>
<dbReference type="SMR" id="Q6DKK2"/>
<dbReference type="BioGRID" id="120248">
    <property type="interactions" value="127"/>
</dbReference>
<dbReference type="FunCoup" id="Q6DKK2">
    <property type="interactions" value="1031"/>
</dbReference>
<dbReference type="IntAct" id="Q6DKK2">
    <property type="interactions" value="110"/>
</dbReference>
<dbReference type="MINT" id="Q6DKK2"/>
<dbReference type="STRING" id="9606.ENSP00000261647"/>
<dbReference type="iPTMnet" id="Q6DKK2"/>
<dbReference type="MetOSite" id="Q6DKK2"/>
<dbReference type="PhosphoSitePlus" id="Q6DKK2"/>
<dbReference type="BioMuta" id="TTC19"/>
<dbReference type="DMDM" id="332278244"/>
<dbReference type="jPOST" id="Q6DKK2"/>
<dbReference type="MassIVE" id="Q6DKK2"/>
<dbReference type="PaxDb" id="9606-ENSP00000261647"/>
<dbReference type="PeptideAtlas" id="Q6DKK2"/>
<dbReference type="ProteomicsDB" id="66236"/>
<dbReference type="Pumba" id="Q6DKK2"/>
<dbReference type="Antibodypedia" id="13179">
    <property type="antibodies" value="79 antibodies from 20 providers"/>
</dbReference>
<dbReference type="DNASU" id="54902"/>
<dbReference type="Ensembl" id="ENST00000261647.10">
    <property type="protein sequence ID" value="ENSP00000261647.5"/>
    <property type="gene ID" value="ENSG00000011295.16"/>
</dbReference>
<dbReference type="GeneID" id="54902"/>
<dbReference type="KEGG" id="hsa:54902"/>
<dbReference type="MANE-Select" id="ENST00000261647.10">
    <property type="protein sequence ID" value="ENSP00000261647.5"/>
    <property type="RefSeq nucleotide sequence ID" value="NM_017775.4"/>
    <property type="RefSeq protein sequence ID" value="NP_060245.3"/>
</dbReference>
<dbReference type="UCSC" id="uc002gph.4">
    <property type="organism name" value="human"/>
</dbReference>
<dbReference type="AGR" id="HGNC:26006"/>
<dbReference type="CTD" id="54902"/>
<dbReference type="DisGeNET" id="54902"/>
<dbReference type="GeneCards" id="TTC19"/>
<dbReference type="HGNC" id="HGNC:26006">
    <property type="gene designation" value="TTC19"/>
</dbReference>
<dbReference type="HPA" id="ENSG00000011295">
    <property type="expression patterns" value="Low tissue specificity"/>
</dbReference>
<dbReference type="MalaCards" id="TTC19"/>
<dbReference type="MIM" id="613814">
    <property type="type" value="gene"/>
</dbReference>
<dbReference type="MIM" id="615157">
    <property type="type" value="phenotype"/>
</dbReference>
<dbReference type="neXtProt" id="NX_Q6DKK2"/>
<dbReference type="OpenTargets" id="ENSG00000011295"/>
<dbReference type="Orphanet" id="1460">
    <property type="disease" value="Isolated complex III deficiency"/>
</dbReference>
<dbReference type="PharmGKB" id="PA134922384"/>
<dbReference type="VEuPathDB" id="HostDB:ENSG00000011295"/>
<dbReference type="eggNOG" id="KOG1840">
    <property type="taxonomic scope" value="Eukaryota"/>
</dbReference>
<dbReference type="GeneTree" id="ENSGT00390000009194"/>
<dbReference type="HOGENOM" id="CLU_057135_1_0_1"/>
<dbReference type="InParanoid" id="Q6DKK2"/>
<dbReference type="OMA" id="ANTYYEM"/>
<dbReference type="OrthoDB" id="5986190at2759"/>
<dbReference type="PAN-GO" id="Q6DKK2">
    <property type="GO annotations" value="2 GO annotations based on evolutionary models"/>
</dbReference>
<dbReference type="TreeFam" id="TF314010"/>
<dbReference type="PathwayCommons" id="Q6DKK2"/>
<dbReference type="Reactome" id="R-HSA-9865881">
    <property type="pathway name" value="Complex III assembly"/>
</dbReference>
<dbReference type="SignaLink" id="Q6DKK2"/>
<dbReference type="SIGNOR" id="Q6DKK2"/>
<dbReference type="BioGRID-ORCS" id="54902">
    <property type="hits" value="78 hits in 1162 CRISPR screens"/>
</dbReference>
<dbReference type="ChiTaRS" id="TTC19">
    <property type="organism name" value="human"/>
</dbReference>
<dbReference type="GenomeRNAi" id="54902"/>
<dbReference type="Pharos" id="Q6DKK2">
    <property type="development level" value="Tbio"/>
</dbReference>
<dbReference type="PRO" id="PR:Q6DKK2"/>
<dbReference type="Proteomes" id="UP000005640">
    <property type="component" value="Chromosome 17"/>
</dbReference>
<dbReference type="RNAct" id="Q6DKK2">
    <property type="molecule type" value="protein"/>
</dbReference>
<dbReference type="Bgee" id="ENSG00000011295">
    <property type="expression patterns" value="Expressed in jejunal mucosa and 201 other cell types or tissues"/>
</dbReference>
<dbReference type="ExpressionAtlas" id="Q6DKK2">
    <property type="expression patterns" value="baseline and differential"/>
</dbReference>
<dbReference type="GO" id="GO:0005813">
    <property type="term" value="C:centrosome"/>
    <property type="evidence" value="ECO:0000304"/>
    <property type="project" value="UniProtKB"/>
</dbReference>
<dbReference type="GO" id="GO:0030496">
    <property type="term" value="C:midbody"/>
    <property type="evidence" value="ECO:0000304"/>
    <property type="project" value="UniProtKB"/>
</dbReference>
<dbReference type="GO" id="GO:0005743">
    <property type="term" value="C:mitochondrial inner membrane"/>
    <property type="evidence" value="ECO:0000314"/>
    <property type="project" value="UniProtKB"/>
</dbReference>
<dbReference type="GO" id="GO:0005739">
    <property type="term" value="C:mitochondrion"/>
    <property type="evidence" value="ECO:0000314"/>
    <property type="project" value="HPA"/>
</dbReference>
<dbReference type="GO" id="GO:0034551">
    <property type="term" value="P:mitochondrial respiratory chain complex III assembly"/>
    <property type="evidence" value="ECO:0000315"/>
    <property type="project" value="UniProtKB"/>
</dbReference>
<dbReference type="GO" id="GO:0000281">
    <property type="term" value="P:mitotic cytokinesis"/>
    <property type="evidence" value="ECO:0000304"/>
    <property type="project" value="UniProtKB"/>
</dbReference>
<dbReference type="FunFam" id="1.25.40.10:FF:000240">
    <property type="entry name" value="Tetratricopeptide repeat protein 19, mitochondrial"/>
    <property type="match status" value="1"/>
</dbReference>
<dbReference type="Gene3D" id="1.25.40.10">
    <property type="entry name" value="Tetratricopeptide repeat domain"/>
    <property type="match status" value="1"/>
</dbReference>
<dbReference type="InterPro" id="IPR011990">
    <property type="entry name" value="TPR-like_helical_dom_sf"/>
</dbReference>
<dbReference type="InterPro" id="IPR019734">
    <property type="entry name" value="TPR_rpt"/>
</dbReference>
<dbReference type="InterPro" id="IPR040395">
    <property type="entry name" value="TTC19"/>
</dbReference>
<dbReference type="PANTHER" id="PTHR13143">
    <property type="entry name" value="TETRATRICOPEPTIDE REPEAT PROTEIN 19"/>
    <property type="match status" value="1"/>
</dbReference>
<dbReference type="PANTHER" id="PTHR13143:SF6">
    <property type="entry name" value="TETRATRICOPEPTIDE REPEAT PROTEIN 19, MITOCHONDRIAL"/>
    <property type="match status" value="1"/>
</dbReference>
<dbReference type="Pfam" id="PF13374">
    <property type="entry name" value="TPR_10"/>
    <property type="match status" value="1"/>
</dbReference>
<dbReference type="Pfam" id="PF13424">
    <property type="entry name" value="TPR_12"/>
    <property type="match status" value="1"/>
</dbReference>
<dbReference type="SMART" id="SM00028">
    <property type="entry name" value="TPR"/>
    <property type="match status" value="4"/>
</dbReference>
<dbReference type="SUPFAM" id="SSF48452">
    <property type="entry name" value="TPR-like"/>
    <property type="match status" value="2"/>
</dbReference>
<dbReference type="PROSITE" id="PS50293">
    <property type="entry name" value="TPR_REGION"/>
    <property type="match status" value="1"/>
</dbReference>
<proteinExistence type="evidence at protein level"/>
<comment type="function">
    <text evidence="4 6">Required for the preservation of the structural and functional integrity of mitochondrial respiratory complex III by allowing the physiological turnover of the Rieske protein UQCRFS1 (PubMed:21278747, PubMed:28673544). Involved in the clearance of UQCRFS1 N-terminal fragments, which are produced upon incorporation of UQCRFS1 into the complex III and whose presence is detrimental for its catalytic activity (PubMed:28673544).</text>
</comment>
<comment type="subunit">
    <text evidence="1 3 6">Binds to the mature mitochondrial complex III dimer, after the incorporation of the Rieske protein UQCRFS1 (PubMed:28673544). Interacts with UQCRC1 and UQCRFS1 (By similarity). Interacts with ZFYVE26 and CHMP4B (PubMed:20208530).</text>
</comment>
<comment type="interaction">
    <interactant intactId="EBI-948354">
        <id>Q6DKK2</id>
    </interactant>
    <interactant intactId="EBI-727098">
        <id>P21549</id>
        <label>AGXT</label>
    </interactant>
    <organismsDiffer>false</organismsDiffer>
    <experiments>3</experiments>
</comment>
<comment type="interaction">
    <interactant intactId="EBI-948354">
        <id>Q6DKK2</id>
    </interactant>
    <interactant intactId="EBI-1047565">
        <id>P07741</id>
        <label>APRT</label>
    </interactant>
    <organismsDiffer>false</organismsDiffer>
    <experiments>3</experiments>
</comment>
<comment type="interaction">
    <interactant intactId="EBI-948354">
        <id>Q6DKK2</id>
    </interactant>
    <interactant intactId="EBI-930964">
        <id>P54253</id>
        <label>ATXN1</label>
    </interactant>
    <organismsDiffer>false</organismsDiffer>
    <experiments>7</experiments>
</comment>
<comment type="interaction">
    <interactant intactId="EBI-948354">
        <id>Q6DKK2</id>
    </interactant>
    <interactant intactId="EBI-12155483">
        <id>Q9H1P6</id>
        <label>CIMIP1</label>
    </interactant>
    <organismsDiffer>false</organismsDiffer>
    <experiments>3</experiments>
</comment>
<comment type="interaction">
    <interactant intactId="EBI-948354">
        <id>Q6DKK2</id>
    </interactant>
    <interactant intactId="EBI-1053384">
        <id>P30085</id>
        <label>CMPK1</label>
    </interactant>
    <organismsDiffer>false</organismsDiffer>
    <experiments>2</experiments>
</comment>
<comment type="interaction">
    <interactant intactId="EBI-948354">
        <id>Q6DKK2</id>
    </interactant>
    <interactant intactId="EBI-2874677">
        <id>Q5JTJ3</id>
        <label>COA6</label>
    </interactant>
    <organismsDiffer>false</organismsDiffer>
    <experiments>3</experiments>
</comment>
<comment type="interaction">
    <interactant intactId="EBI-948354">
        <id>Q6DKK2</id>
    </interactant>
    <interactant intactId="EBI-9679045">
        <id>Q9NQL9</id>
        <label>DMRT3</label>
    </interactant>
    <organismsDiffer>false</organismsDiffer>
    <experiments>3</experiments>
</comment>
<comment type="interaction">
    <interactant intactId="EBI-948354">
        <id>Q6DKK2</id>
    </interactant>
    <interactant intactId="EBI-301024">
        <id>Q9NRA8</id>
        <label>EIF4ENIF1</label>
    </interactant>
    <organismsDiffer>false</organismsDiffer>
    <experiments>3</experiments>
</comment>
<comment type="interaction">
    <interactant intactId="EBI-948354">
        <id>Q6DKK2</id>
    </interactant>
    <interactant intactId="EBI-373319">
        <id>Q96C01</id>
        <label>FAM136A</label>
    </interactant>
    <organismsDiffer>false</organismsDiffer>
    <experiments>3</experiments>
</comment>
<comment type="interaction">
    <interactant intactId="EBI-948354">
        <id>Q6DKK2</id>
    </interactant>
    <interactant intactId="EBI-19153639">
        <id>Q9NTX9</id>
        <label>FAM217B</label>
    </interactant>
    <organismsDiffer>false</organismsDiffer>
    <experiments>3</experiments>
</comment>
<comment type="interaction">
    <interactant intactId="EBI-948354">
        <id>Q6DKK2</id>
    </interactant>
    <interactant intactId="EBI-1050358">
        <id>P07954</id>
        <label>FH</label>
    </interactant>
    <organismsDiffer>false</organismsDiffer>
    <experiments>3</experiments>
</comment>
<comment type="interaction">
    <interactant intactId="EBI-948354">
        <id>Q6DKK2</id>
    </interactant>
    <interactant intactId="EBI-18138793">
        <id>Q9C0B1-2</id>
        <label>FTO</label>
    </interactant>
    <organismsDiffer>false</organismsDiffer>
    <experiments>3</experiments>
</comment>
<comment type="interaction">
    <interactant intactId="EBI-948354">
        <id>Q6DKK2</id>
    </interactant>
    <interactant intactId="EBI-739467">
        <id>Q9H8Y8</id>
        <label>GORASP2</label>
    </interactant>
    <organismsDiffer>false</organismsDiffer>
    <experiments>5</experiments>
</comment>
<comment type="interaction">
    <interactant intactId="EBI-948354">
        <id>Q6DKK2</id>
    </interactant>
    <interactant intactId="EBI-751540">
        <id>O95872</id>
        <label>GPANK1</label>
    </interactant>
    <organismsDiffer>false</organismsDiffer>
    <experiments>6</experiments>
</comment>
<comment type="interaction">
    <interactant intactId="EBI-948354">
        <id>Q6DKK2</id>
    </interactant>
    <interactant intactId="EBI-2340074">
        <id>Q16774</id>
        <label>GUK1</label>
    </interactant>
    <organismsDiffer>false</organismsDiffer>
    <experiments>2</experiments>
</comment>
<comment type="interaction">
    <interactant intactId="EBI-948354">
        <id>Q6DKK2</id>
    </interactant>
    <interactant intactId="EBI-6190240">
        <id>P02100</id>
        <label>HBE1</label>
    </interactant>
    <organismsDiffer>false</organismsDiffer>
    <experiments>3</experiments>
</comment>
<comment type="interaction">
    <interactant intactId="EBI-948354">
        <id>Q6DKK2</id>
    </interactant>
    <interactant intactId="EBI-17244356">
        <id>P35452-2</id>
        <label>HOXD12</label>
    </interactant>
    <organismsDiffer>false</organismsDiffer>
    <experiments>3</experiments>
</comment>
<comment type="interaction">
    <interactant intactId="EBI-948354">
        <id>Q6DKK2</id>
    </interactant>
    <interactant intactId="EBI-517086">
        <id>O43464</id>
        <label>HTRA2</label>
    </interactant>
    <organismsDiffer>false</organismsDiffer>
    <experiments>4</experiments>
</comment>
<comment type="interaction">
    <interactant intactId="EBI-948354">
        <id>Q6DKK2</id>
    </interactant>
    <interactant intactId="EBI-466029">
        <id>P42858</id>
        <label>HTT</label>
    </interactant>
    <organismsDiffer>false</organismsDiffer>
    <experiments>3</experiments>
</comment>
<comment type="interaction">
    <interactant intactId="EBI-948354">
        <id>Q6DKK2</id>
    </interactant>
    <interactant intactId="EBI-8638439">
        <id>Q8IYA8</id>
        <label>IHO1</label>
    </interactant>
    <organismsDiffer>false</organismsDiffer>
    <experiments>6</experiments>
</comment>
<comment type="interaction">
    <interactant intactId="EBI-948354">
        <id>Q6DKK2</id>
    </interactant>
    <interactant intactId="EBI-1055254">
        <id>Q8WXH2</id>
        <label>JPH3</label>
    </interactant>
    <organismsDiffer>false</organismsDiffer>
    <experiments>3</experiments>
</comment>
<comment type="interaction">
    <interactant intactId="EBI-948354">
        <id>Q6DKK2</id>
    </interactant>
    <interactant intactId="EBI-2686809">
        <id>Q96JM7</id>
        <label>L3MBTL3</label>
    </interactant>
    <organismsDiffer>false</organismsDiffer>
    <experiments>3</experiments>
</comment>
<comment type="interaction">
    <interactant intactId="EBI-948354">
        <id>Q6DKK2</id>
    </interactant>
    <interactant intactId="EBI-11985629">
        <id>Q96JM7-2</id>
        <label>L3MBTL3</label>
    </interactant>
    <organismsDiffer>false</organismsDiffer>
    <experiments>3</experiments>
</comment>
<comment type="interaction">
    <interactant intactId="EBI-948354">
        <id>Q6DKK2</id>
    </interactant>
    <interactant intactId="EBI-2865580">
        <id>O43679</id>
        <label>LDB2</label>
    </interactant>
    <organismsDiffer>false</organismsDiffer>
    <experiments>3</experiments>
</comment>
<comment type="interaction">
    <interactant intactId="EBI-948354">
        <id>Q6DKK2</id>
    </interactant>
    <interactant intactId="EBI-18053274">
        <id>P12872</id>
        <label>MLN</label>
    </interactant>
    <organismsDiffer>false</organismsDiffer>
    <experiments>3</experiments>
</comment>
<comment type="interaction">
    <interactant intactId="EBI-948354">
        <id>Q6DKK2</id>
    </interactant>
    <interactant intactId="EBI-11721798">
        <id>Q9BRK3</id>
        <label>MXRA8</label>
    </interactant>
    <organismsDiffer>false</organismsDiffer>
    <experiments>3</experiments>
</comment>
<comment type="interaction">
    <interactant intactId="EBI-948354">
        <id>Q6DKK2</id>
    </interactant>
    <interactant intactId="EBI-8641936">
        <id>Q15742</id>
        <label>NAB2</label>
    </interactant>
    <organismsDiffer>false</organismsDiffer>
    <experiments>3</experiments>
</comment>
<comment type="interaction">
    <interactant intactId="EBI-948354">
        <id>Q6DKK2</id>
    </interactant>
    <interactant intactId="EBI-744871">
        <id>O00746</id>
        <label>NME4</label>
    </interactant>
    <organismsDiffer>false</organismsDiffer>
    <experiments>3</experiments>
</comment>
<comment type="interaction">
    <interactant intactId="EBI-948354">
        <id>Q6DKK2</id>
    </interactant>
    <interactant intactId="EBI-12029004">
        <id>P78424</id>
        <label>POU6F2</label>
    </interactant>
    <organismsDiffer>false</organismsDiffer>
    <experiments>3</experiments>
</comment>
<comment type="interaction">
    <interactant intactId="EBI-948354">
        <id>Q6DKK2</id>
    </interactant>
    <interactant intactId="EBI-11986293">
        <id>P0CG20</id>
        <label>PRR35</label>
    </interactant>
    <organismsDiffer>false</organismsDiffer>
    <experiments>3</experiments>
</comment>
<comment type="interaction">
    <interactant intactId="EBI-948354">
        <id>Q6DKK2</id>
    </interactant>
    <interactant intactId="EBI-2623483">
        <id>P09455</id>
        <label>RBP1</label>
    </interactant>
    <organismsDiffer>false</organismsDiffer>
    <experiments>3</experiments>
</comment>
<comment type="interaction">
    <interactant intactId="EBI-948354">
        <id>Q6DKK2</id>
    </interactant>
    <interactant intactId="EBI-307352">
        <id>Q04864</id>
        <label>REL</label>
    </interactant>
    <organismsDiffer>false</organismsDiffer>
    <experiments>3</experiments>
</comment>
<comment type="interaction">
    <interactant intactId="EBI-948354">
        <id>Q6DKK2</id>
    </interactant>
    <interactant intactId="EBI-6257312">
        <id>Q9BVN2</id>
        <label>RUSC1</label>
    </interactant>
    <organismsDiffer>false</organismsDiffer>
    <experiments>3</experiments>
</comment>
<comment type="interaction">
    <interactant intactId="EBI-948354">
        <id>Q6DKK2</id>
    </interactant>
    <interactant intactId="EBI-747035">
        <id>Q9H788</id>
        <label>SH2D4A</label>
    </interactant>
    <organismsDiffer>false</organismsDiffer>
    <experiments>3</experiments>
</comment>
<comment type="interaction">
    <interactant intactId="EBI-948354">
        <id>Q6DKK2</id>
    </interactant>
    <interactant intactId="EBI-12037847">
        <id>Q6ZSJ9</id>
        <label>SHISA6</label>
    </interactant>
    <organismsDiffer>false</organismsDiffer>
    <experiments>3</experiments>
</comment>
<comment type="interaction">
    <interactant intactId="EBI-948354">
        <id>Q6DKK2</id>
    </interactant>
    <interactant intactId="EBI-12829638">
        <id>Q8N1D0-2</id>
        <label>SLC22A18AS</label>
    </interactant>
    <organismsDiffer>false</organismsDiffer>
    <experiments>5</experiments>
</comment>
<comment type="interaction">
    <interactant intactId="EBI-948354">
        <id>Q6DKK2</id>
    </interactant>
    <interactant intactId="EBI-2872322">
        <id>Q9H0W8</id>
        <label>SMG9</label>
    </interactant>
    <organismsDiffer>false</organismsDiffer>
    <experiments>3</experiments>
</comment>
<comment type="interaction">
    <interactant intactId="EBI-948354">
        <id>Q6DKK2</id>
    </interactant>
    <interactant intactId="EBI-2853051">
        <id>Q13207</id>
        <label>TBX2</label>
    </interactant>
    <organismsDiffer>false</organismsDiffer>
    <experiments>3</experiments>
</comment>
<comment type="interaction">
    <interactant intactId="EBI-948354">
        <id>Q6DKK2</id>
    </interactant>
    <interactant intactId="EBI-954089">
        <id>O15273</id>
        <label>TCAP</label>
    </interactant>
    <organismsDiffer>false</organismsDiffer>
    <experiments>4</experiments>
</comment>
<comment type="interaction">
    <interactant intactId="EBI-948354">
        <id>Q6DKK2</id>
    </interactant>
    <interactant intactId="EBI-2511991">
        <id>Q9Y2K6</id>
        <label>USP20</label>
    </interactant>
    <organismsDiffer>false</organismsDiffer>
    <experiments>3</experiments>
</comment>
<comment type="interaction">
    <interactant intactId="EBI-948354">
        <id>Q6DKK2</id>
    </interactant>
    <interactant intactId="EBI-11975223">
        <id>Q70EL1-9</id>
        <label>USP54</label>
    </interactant>
    <organismsDiffer>false</organismsDiffer>
    <experiments>3</experiments>
</comment>
<comment type="interaction">
    <interactant intactId="EBI-948354">
        <id>Q6DKK2</id>
    </interactant>
    <interactant intactId="EBI-4395732">
        <id>P0C7X2</id>
        <label>ZNF688</label>
    </interactant>
    <organismsDiffer>false</organismsDiffer>
    <experiments>3</experiments>
</comment>
<comment type="subcellular location">
    <subcellularLocation>
        <location evidence="4">Mitochondrion inner membrane</location>
    </subcellularLocation>
</comment>
<comment type="PTM">
    <text evidence="5">Proteolytically cleaved by PARL.</text>
</comment>
<comment type="disease" evidence="4">
    <disease id="DI-03738">
        <name>Mitochondrial complex III deficiency, nuclear type 2</name>
        <acronym>MC3DN2</acronym>
        <description>A disorder of the mitochondrial respiratory chain resulting in a highly variable phenotype depending on which tissues are affected. Clinical features include mitochondrial encephalopathy, psychomotor retardation, ataxia, severe failure to thrive, liver dysfunction, renal tubulopathy, muscle weakness and exercise intolerance.</description>
        <dbReference type="MIM" id="615157"/>
    </disease>
    <text>The disease is caused by variants affecting the gene represented in this entry.</text>
</comment>
<comment type="similarity">
    <text evidence="7">Belongs to the TTC19 family.</text>
</comment>
<comment type="caution">
    <text evidence="3 4">Was reported to be required for the abscission step in cytokinesis, possibly regulating the ESCRT-III complex via its interaction with CHMP4B (PubMed:20208530). According to the same authors, localizes to the centrosome during all stages of the cell cycle and is recruited to the midbody during cytokinesis (PubMed:20208530). However, the midbody localization could not be confirmed by others (PubMed:21278747).</text>
</comment>
<comment type="sequence caution" evidence="7">
    <conflict type="erroneous initiation">
        <sequence resource="EMBL-CDS" id="AAH11698"/>
    </conflict>
    <text>Extended N-terminus.</text>
</comment>
<comment type="sequence caution" evidence="7">
    <conflict type="erroneous initiation">
        <sequence resource="EMBL-CDS" id="AAH73796"/>
    </conflict>
    <text>Extended N-terminus.</text>
</comment>
<comment type="sequence caution" evidence="7">
    <conflict type="erroneous initiation">
        <sequence resource="EMBL-CDS" id="AAI05129"/>
    </conflict>
    <text>Extended N-terminus.</text>
</comment>
<comment type="sequence caution" evidence="7">
    <conflict type="erroneous initiation">
        <sequence resource="EMBL-CDS" id="AAI12108"/>
    </conflict>
    <text>Extended N-terminus.</text>
</comment>
<comment type="sequence caution" evidence="7">
    <conflict type="erroneous initiation">
        <sequence resource="EMBL-CDS" id="BAA91103"/>
    </conflict>
    <text>Truncated N-terminus.</text>
</comment>
<comment type="sequence caution" evidence="7">
    <conflict type="erroneous initiation">
        <sequence resource="EMBL-CDS" id="BAB15296"/>
    </conflict>
    <text>Truncated N-terminus.</text>
</comment>
<comment type="sequence caution" evidence="7">
    <conflict type="erroneous initiation">
        <sequence resource="EMBL-CDS" id="BAG51574"/>
    </conflict>
    <text>Truncated N-terminus.</text>
</comment>
<comment type="sequence caution" evidence="7">
    <conflict type="erroneous initiation">
        <sequence resource="EMBL-CDS" id="BAG51820"/>
    </conflict>
    <text>Extended N-terminus.</text>
</comment>
<keyword id="KW-0131">Cell cycle</keyword>
<keyword id="KW-0132">Cell division</keyword>
<keyword id="KW-0249">Electron transport</keyword>
<keyword id="KW-0472">Membrane</keyword>
<keyword id="KW-0496">Mitochondrion</keyword>
<keyword id="KW-0999">Mitochondrion inner membrane</keyword>
<keyword id="KW-1274">Primary mitochondrial disease</keyword>
<keyword id="KW-1267">Proteomics identification</keyword>
<keyword id="KW-1185">Reference proteome</keyword>
<keyword id="KW-0677">Repeat</keyword>
<keyword id="KW-0679">Respiratory chain</keyword>
<keyword id="KW-0802">TPR repeat</keyword>
<keyword id="KW-0809">Transit peptide</keyword>
<keyword id="KW-0813">Transport</keyword>
<feature type="transit peptide" description="Mitochondrion" evidence="2">
    <location>
        <begin position="1"/>
        <end position="70"/>
    </location>
</feature>
<feature type="chain" id="PRO_0000106407" description="Tetratricopeptide repeat protein 19, mitochondrial">
    <location>
        <begin position="71"/>
        <end position="380"/>
    </location>
</feature>
<feature type="repeat" description="TPR 1">
    <location>
        <begin position="136"/>
        <end position="169"/>
    </location>
</feature>
<feature type="repeat" description="TPR 2">
    <location>
        <begin position="179"/>
        <end position="212"/>
    </location>
</feature>
<feature type="repeat" description="TPR 3">
    <location>
        <begin position="237"/>
        <end position="270"/>
    </location>
</feature>
<feature type="repeat" description="TPR 4">
    <location>
        <begin position="279"/>
        <end position="312"/>
    </location>
</feature>
<feature type="repeat" description="TPR 5">
    <location>
        <begin position="318"/>
        <end position="351"/>
    </location>
</feature>
<feature type="site" description="Cleavage; by PARL" evidence="5">
    <location>
        <begin position="71"/>
        <end position="72"/>
    </location>
</feature>
<feature type="sequence conflict" description="In Ref. 1; BAG51574." evidence="7" ref="1">
    <original>M</original>
    <variation>V</variation>
    <location>
        <position position="282"/>
    </location>
</feature>
<feature type="sequence conflict" description="In Ref. 1; BAB15296." evidence="7" ref="1">
    <original>E</original>
    <variation>K</variation>
    <location>
        <position position="366"/>
    </location>
</feature>
<evidence type="ECO:0000250" key="1">
    <source>
        <dbReference type="UniProtKB" id="Q8CC21"/>
    </source>
</evidence>
<evidence type="ECO:0000255" key="2"/>
<evidence type="ECO:0000269" key="3">
    <source>
    </source>
</evidence>
<evidence type="ECO:0000269" key="4">
    <source>
    </source>
</evidence>
<evidence type="ECO:0000269" key="5">
    <source>
    </source>
</evidence>
<evidence type="ECO:0000269" key="6">
    <source>
    </source>
</evidence>
<evidence type="ECO:0000305" key="7"/>
<reference key="1">
    <citation type="journal article" date="2004" name="Nat. Genet.">
        <title>Complete sequencing and characterization of 21,243 full-length human cDNAs.</title>
        <authorList>
            <person name="Ota T."/>
            <person name="Suzuki Y."/>
            <person name="Nishikawa T."/>
            <person name="Otsuki T."/>
            <person name="Sugiyama T."/>
            <person name="Irie R."/>
            <person name="Wakamatsu A."/>
            <person name="Hayashi K."/>
            <person name="Sato H."/>
            <person name="Nagai K."/>
            <person name="Kimura K."/>
            <person name="Makita H."/>
            <person name="Sekine M."/>
            <person name="Obayashi M."/>
            <person name="Nishi T."/>
            <person name="Shibahara T."/>
            <person name="Tanaka T."/>
            <person name="Ishii S."/>
            <person name="Yamamoto J."/>
            <person name="Saito K."/>
            <person name="Kawai Y."/>
            <person name="Isono Y."/>
            <person name="Nakamura Y."/>
            <person name="Nagahari K."/>
            <person name="Murakami K."/>
            <person name="Yasuda T."/>
            <person name="Iwayanagi T."/>
            <person name="Wagatsuma M."/>
            <person name="Shiratori A."/>
            <person name="Sudo H."/>
            <person name="Hosoiri T."/>
            <person name="Kaku Y."/>
            <person name="Kodaira H."/>
            <person name="Kondo H."/>
            <person name="Sugawara M."/>
            <person name="Takahashi M."/>
            <person name="Kanda K."/>
            <person name="Yokoi T."/>
            <person name="Furuya T."/>
            <person name="Kikkawa E."/>
            <person name="Omura Y."/>
            <person name="Abe K."/>
            <person name="Kamihara K."/>
            <person name="Katsuta N."/>
            <person name="Sato K."/>
            <person name="Tanikawa M."/>
            <person name="Yamazaki M."/>
            <person name="Ninomiya K."/>
            <person name="Ishibashi T."/>
            <person name="Yamashita H."/>
            <person name="Murakawa K."/>
            <person name="Fujimori K."/>
            <person name="Tanai H."/>
            <person name="Kimata M."/>
            <person name="Watanabe M."/>
            <person name="Hiraoka S."/>
            <person name="Chiba Y."/>
            <person name="Ishida S."/>
            <person name="Ono Y."/>
            <person name="Takiguchi S."/>
            <person name="Watanabe S."/>
            <person name="Yosida M."/>
            <person name="Hotuta T."/>
            <person name="Kusano J."/>
            <person name="Kanehori K."/>
            <person name="Takahashi-Fujii A."/>
            <person name="Hara H."/>
            <person name="Tanase T.-O."/>
            <person name="Nomura Y."/>
            <person name="Togiya S."/>
            <person name="Komai F."/>
            <person name="Hara R."/>
            <person name="Takeuchi K."/>
            <person name="Arita M."/>
            <person name="Imose N."/>
            <person name="Musashino K."/>
            <person name="Yuuki H."/>
            <person name="Oshima A."/>
            <person name="Sasaki N."/>
            <person name="Aotsuka S."/>
            <person name="Yoshikawa Y."/>
            <person name="Matsunawa H."/>
            <person name="Ichihara T."/>
            <person name="Shiohata N."/>
            <person name="Sano S."/>
            <person name="Moriya S."/>
            <person name="Momiyama H."/>
            <person name="Satoh N."/>
            <person name="Takami S."/>
            <person name="Terashima Y."/>
            <person name="Suzuki O."/>
            <person name="Nakagawa S."/>
            <person name="Senoh A."/>
            <person name="Mizoguchi H."/>
            <person name="Goto Y."/>
            <person name="Shimizu F."/>
            <person name="Wakebe H."/>
            <person name="Hishigaki H."/>
            <person name="Watanabe T."/>
            <person name="Sugiyama A."/>
            <person name="Takemoto M."/>
            <person name="Kawakami B."/>
            <person name="Yamazaki M."/>
            <person name="Watanabe K."/>
            <person name="Kumagai A."/>
            <person name="Itakura S."/>
            <person name="Fukuzumi Y."/>
            <person name="Fujimori Y."/>
            <person name="Komiyama M."/>
            <person name="Tashiro H."/>
            <person name="Tanigami A."/>
            <person name="Fujiwara T."/>
            <person name="Ono T."/>
            <person name="Yamada K."/>
            <person name="Fujii Y."/>
            <person name="Ozaki K."/>
            <person name="Hirao M."/>
            <person name="Ohmori Y."/>
            <person name="Kawabata A."/>
            <person name="Hikiji T."/>
            <person name="Kobatake N."/>
            <person name="Inagaki H."/>
            <person name="Ikema Y."/>
            <person name="Okamoto S."/>
            <person name="Okitani R."/>
            <person name="Kawakami T."/>
            <person name="Noguchi S."/>
            <person name="Itoh T."/>
            <person name="Shigeta K."/>
            <person name="Senba T."/>
            <person name="Matsumura K."/>
            <person name="Nakajima Y."/>
            <person name="Mizuno T."/>
            <person name="Morinaga M."/>
            <person name="Sasaki M."/>
            <person name="Togashi T."/>
            <person name="Oyama M."/>
            <person name="Hata H."/>
            <person name="Watanabe M."/>
            <person name="Komatsu T."/>
            <person name="Mizushima-Sugano J."/>
            <person name="Satoh T."/>
            <person name="Shirai Y."/>
            <person name="Takahashi Y."/>
            <person name="Nakagawa K."/>
            <person name="Okumura K."/>
            <person name="Nagase T."/>
            <person name="Nomura N."/>
            <person name="Kikuchi H."/>
            <person name="Masuho Y."/>
            <person name="Yamashita R."/>
            <person name="Nakai K."/>
            <person name="Yada T."/>
            <person name="Nakamura Y."/>
            <person name="Ohara O."/>
            <person name="Isogai T."/>
            <person name="Sugano S."/>
        </authorList>
    </citation>
    <scope>NUCLEOTIDE SEQUENCE [LARGE SCALE MRNA]</scope>
    <source>
        <tissue>Chondrocyte</tissue>
        <tissue>Kidney</tissue>
    </source>
</reference>
<reference key="2">
    <citation type="journal article" date="2006" name="Nature">
        <title>DNA sequence of human chromosome 17 and analysis of rearrangement in the human lineage.</title>
        <authorList>
            <person name="Zody M.C."/>
            <person name="Garber M."/>
            <person name="Adams D.J."/>
            <person name="Sharpe T."/>
            <person name="Harrow J."/>
            <person name="Lupski J.R."/>
            <person name="Nicholson C."/>
            <person name="Searle S.M."/>
            <person name="Wilming L."/>
            <person name="Young S.K."/>
            <person name="Abouelleil A."/>
            <person name="Allen N.R."/>
            <person name="Bi W."/>
            <person name="Bloom T."/>
            <person name="Borowsky M.L."/>
            <person name="Bugalter B.E."/>
            <person name="Butler J."/>
            <person name="Chang J.L."/>
            <person name="Chen C.-K."/>
            <person name="Cook A."/>
            <person name="Corum B."/>
            <person name="Cuomo C.A."/>
            <person name="de Jong P.J."/>
            <person name="DeCaprio D."/>
            <person name="Dewar K."/>
            <person name="FitzGerald M."/>
            <person name="Gilbert J."/>
            <person name="Gibson R."/>
            <person name="Gnerre S."/>
            <person name="Goldstein S."/>
            <person name="Grafham D.V."/>
            <person name="Grocock R."/>
            <person name="Hafez N."/>
            <person name="Hagopian D.S."/>
            <person name="Hart E."/>
            <person name="Norman C.H."/>
            <person name="Humphray S."/>
            <person name="Jaffe D.B."/>
            <person name="Jones M."/>
            <person name="Kamal M."/>
            <person name="Khodiyar V.K."/>
            <person name="LaButti K."/>
            <person name="Laird G."/>
            <person name="Lehoczky J."/>
            <person name="Liu X."/>
            <person name="Lokyitsang T."/>
            <person name="Loveland J."/>
            <person name="Lui A."/>
            <person name="Macdonald P."/>
            <person name="Major J.E."/>
            <person name="Matthews L."/>
            <person name="Mauceli E."/>
            <person name="McCarroll S.A."/>
            <person name="Mihalev A.H."/>
            <person name="Mudge J."/>
            <person name="Nguyen C."/>
            <person name="Nicol R."/>
            <person name="O'Leary S.B."/>
            <person name="Osoegawa K."/>
            <person name="Schwartz D.C."/>
            <person name="Shaw-Smith C."/>
            <person name="Stankiewicz P."/>
            <person name="Steward C."/>
            <person name="Swarbreck D."/>
            <person name="Venkataraman V."/>
            <person name="Whittaker C.A."/>
            <person name="Yang X."/>
            <person name="Zimmer A.R."/>
            <person name="Bradley A."/>
            <person name="Hubbard T."/>
            <person name="Birren B.W."/>
            <person name="Rogers J."/>
            <person name="Lander E.S."/>
            <person name="Nusbaum C."/>
        </authorList>
    </citation>
    <scope>NUCLEOTIDE SEQUENCE [LARGE SCALE GENOMIC DNA]</scope>
</reference>
<reference key="3">
    <citation type="submission" date="2005-07" db="EMBL/GenBank/DDBJ databases">
        <authorList>
            <person name="Mural R.J."/>
            <person name="Istrail S."/>
            <person name="Sutton G.G."/>
            <person name="Florea L."/>
            <person name="Halpern A.L."/>
            <person name="Mobarry C.M."/>
            <person name="Lippert R."/>
            <person name="Walenz B."/>
            <person name="Shatkay H."/>
            <person name="Dew I."/>
            <person name="Miller J.R."/>
            <person name="Flanigan M.J."/>
            <person name="Edwards N.J."/>
            <person name="Bolanos R."/>
            <person name="Fasulo D."/>
            <person name="Halldorsson B.V."/>
            <person name="Hannenhalli S."/>
            <person name="Turner R."/>
            <person name="Yooseph S."/>
            <person name="Lu F."/>
            <person name="Nusskern D.R."/>
            <person name="Shue B.C."/>
            <person name="Zheng X.H."/>
            <person name="Zhong F."/>
            <person name="Delcher A.L."/>
            <person name="Huson D.H."/>
            <person name="Kravitz S.A."/>
            <person name="Mouchard L."/>
            <person name="Reinert K."/>
            <person name="Remington K.A."/>
            <person name="Clark A.G."/>
            <person name="Waterman M.S."/>
            <person name="Eichler E.E."/>
            <person name="Adams M.D."/>
            <person name="Hunkapiller M.W."/>
            <person name="Myers E.W."/>
            <person name="Venter J.C."/>
        </authorList>
    </citation>
    <scope>NUCLEOTIDE SEQUENCE [LARGE SCALE GENOMIC DNA]</scope>
</reference>
<reference key="4">
    <citation type="journal article" date="2004" name="Genome Res.">
        <title>The status, quality, and expansion of the NIH full-length cDNA project: the Mammalian Gene Collection (MGC).</title>
        <authorList>
            <consortium name="The MGC Project Team"/>
        </authorList>
    </citation>
    <scope>NUCLEOTIDE SEQUENCE [LARGE SCALE MRNA]</scope>
    <source>
        <tissue>Brain</tissue>
        <tissue>Muscle</tissue>
    </source>
</reference>
<reference key="5">
    <citation type="journal article" date="2010" name="Nat. Cell Biol.">
        <title>PtdIns(3)P controls cytokinesis through KIF13A-mediated recruitment of FYVE-CENT to the midbody.</title>
        <authorList>
            <person name="Sagona A.P."/>
            <person name="Nezis I.P."/>
            <person name="Pedersen N.M."/>
            <person name="Liestol K."/>
            <person name="Poulton J."/>
            <person name="Rusten T.E."/>
            <person name="Skotheim R.I."/>
            <person name="Raiborg C."/>
            <person name="Stenmark H."/>
        </authorList>
    </citation>
    <scope>INTERACTION WITH ZFYVE26 AND CHMP4B</scope>
    <scope>CAUTION</scope>
</reference>
<reference key="6">
    <citation type="journal article" date="2011" name="BMC Syst. Biol.">
        <title>Initial characterization of the human central proteome.</title>
        <authorList>
            <person name="Burkard T.R."/>
            <person name="Planyavsky M."/>
            <person name="Kaupe I."/>
            <person name="Breitwieser F.P."/>
            <person name="Buerckstuemmer T."/>
            <person name="Bennett K.L."/>
            <person name="Superti-Furga G."/>
            <person name="Colinge J."/>
        </authorList>
    </citation>
    <scope>IDENTIFICATION BY MASS SPECTROMETRY [LARGE SCALE ANALYSIS]</scope>
</reference>
<reference key="7">
    <citation type="journal article" date="2011" name="Nat. Genet.">
        <title>Mutations in TTC19 cause mitochondrial complex III deficiency and neurological impairment in humans and flies.</title>
        <authorList>
            <person name="Ghezzi D."/>
            <person name="Arzuffi P."/>
            <person name="Zordan M."/>
            <person name="Da Re C."/>
            <person name="Lamperti C."/>
            <person name="Benna C."/>
            <person name="D'Adamo P."/>
            <person name="Diodato D."/>
            <person name="Costa R."/>
            <person name="Mariotti C."/>
            <person name="Uziel G."/>
            <person name="Smiderle C."/>
            <person name="Zeviani M."/>
        </authorList>
    </citation>
    <scope>INVOLVEMENT IN MC3DN2</scope>
    <scope>SUBCELLULAR LOCATION</scope>
    <scope>FUNCTION</scope>
</reference>
<reference key="8">
    <citation type="journal article" date="2013" name="J. Proteome Res.">
        <title>Toward a comprehensive characterization of a human cancer cell phosphoproteome.</title>
        <authorList>
            <person name="Zhou H."/>
            <person name="Di Palma S."/>
            <person name="Preisinger C."/>
            <person name="Peng M."/>
            <person name="Polat A.N."/>
            <person name="Heck A.J."/>
            <person name="Mohammed S."/>
        </authorList>
    </citation>
    <scope>IDENTIFICATION BY MASS SPECTROMETRY [LARGE SCALE ANALYSIS]</scope>
    <source>
        <tissue>Erythroleukemia</tissue>
    </source>
</reference>
<reference key="9">
    <citation type="journal article" date="2017" name="Mol. Cell">
        <title>TTC19 plays a husbandry role on UQCRFS1 turnover in the biogenesis of mitochondrial respiratory complex III.</title>
        <authorList>
            <person name="Bottani E."/>
            <person name="Cerutti R."/>
            <person name="Harbour M.E."/>
            <person name="Ravaglia S."/>
            <person name="Dogan S.A."/>
            <person name="Giordano C."/>
            <person name="Fearnley I.M."/>
            <person name="D'Amati G."/>
            <person name="Viscomi C."/>
            <person name="Fernandez-Vizarra E."/>
            <person name="Zeviani M."/>
        </authorList>
    </citation>
    <scope>FUNCTION</scope>
    <scope>SUBUNIT</scope>
    <scope>INTERACTION WITH COMPLEX III</scope>
</reference>
<reference key="10">
    <citation type="journal article" date="2017" name="Nat. Cell Biol.">
        <title>PARL mediates Smac proteolytic maturation in mitochondria to promote apoptosis.</title>
        <authorList>
            <person name="Saita S."/>
            <person name="Nolte H."/>
            <person name="Fiedler K.U."/>
            <person name="Kashkar H."/>
            <person name="Venne A.S."/>
            <person name="Zahedi R.P."/>
            <person name="Krueger M."/>
            <person name="Langer T."/>
        </authorList>
    </citation>
    <scope>PROTEOLYTIC CLEAVAGE</scope>
</reference>
<protein>
    <recommendedName>
        <fullName>Tetratricopeptide repeat protein 19, mitochondrial</fullName>
        <shortName>TPR repeat protein 19</shortName>
    </recommendedName>
</protein>
<name>TTC19_HUMAN</name>
<gene>
    <name type="primary">TTC19</name>
</gene>
<sequence>MFRLLSWSLGRGFLRAAGRRCRGCSARLLPGLAGGPGPEVQVPPSRVAPHGRGPGLLPLLAALAWFSRPAAAEEEEQQGADGAAAEDGADEAEAEIIQLLKRAKLSIMKDEPEEAELILHDALRLAYQTDNKKAITYTYDLMANLAFIRGQLENAEQLFKATMSYLLGGGMKQEDNAIIEISLKLASIYAAQNRQEFAVAGYEFCISTLEEKIEREKELAEDIMSVEEKANTHLLLGMCLDACARYLLFSKQPSQAQRMYEKALQISEEIQGERHPQTIVLMSDLATTLDAQGRFDEAYIYMQRASDLARQINHPELHMVLSNLAAVLMHRERYTQAKEIYQEALKQAKLKKDEISVQHIREELAELSKKSRPLTNSVKL</sequence>